<feature type="chain" id="PRO_1000064631" description="Macrodomain Ter protein">
    <location>
        <begin position="1"/>
        <end position="148"/>
    </location>
</feature>
<dbReference type="EMBL" id="CP000671">
    <property type="protein sequence ID" value="ABQ98390.1"/>
    <property type="molecule type" value="Genomic_DNA"/>
</dbReference>
<dbReference type="SMR" id="A5UC89"/>
<dbReference type="KEGG" id="hip:CGSHiEE_04995"/>
<dbReference type="HOGENOM" id="CLU_142157_0_0_6"/>
<dbReference type="GO" id="GO:0005737">
    <property type="term" value="C:cytoplasm"/>
    <property type="evidence" value="ECO:0007669"/>
    <property type="project" value="UniProtKB-SubCell"/>
</dbReference>
<dbReference type="GO" id="GO:0043565">
    <property type="term" value="F:sequence-specific DNA binding"/>
    <property type="evidence" value="ECO:0007669"/>
    <property type="project" value="UniProtKB-UniRule"/>
</dbReference>
<dbReference type="GO" id="GO:0051301">
    <property type="term" value="P:cell division"/>
    <property type="evidence" value="ECO:0007669"/>
    <property type="project" value="UniProtKB-UniRule"/>
</dbReference>
<dbReference type="GO" id="GO:0006355">
    <property type="term" value="P:regulation of DNA-templated transcription"/>
    <property type="evidence" value="ECO:0007669"/>
    <property type="project" value="InterPro"/>
</dbReference>
<dbReference type="Gene3D" id="1.20.1270.380">
    <property type="entry name" value="MatP, N-terminal domain"/>
    <property type="match status" value="1"/>
</dbReference>
<dbReference type="Gene3D" id="1.10.1220.10">
    <property type="entry name" value="Met repressor-like"/>
    <property type="match status" value="1"/>
</dbReference>
<dbReference type="HAMAP" id="MF_01073">
    <property type="entry name" value="MatP"/>
    <property type="match status" value="1"/>
</dbReference>
<dbReference type="InterPro" id="IPR013321">
    <property type="entry name" value="Arc_rbn_hlx_hlx"/>
</dbReference>
<dbReference type="InterPro" id="IPR009390">
    <property type="entry name" value="MatP"/>
</dbReference>
<dbReference type="InterPro" id="IPR035375">
    <property type="entry name" value="MatP_C"/>
</dbReference>
<dbReference type="InterPro" id="IPR035087">
    <property type="entry name" value="MatP_N"/>
</dbReference>
<dbReference type="InterPro" id="IPR038339">
    <property type="entry name" value="MatP_N_sf"/>
</dbReference>
<dbReference type="NCBIfam" id="NF003471">
    <property type="entry name" value="PRK05097.1"/>
    <property type="match status" value="1"/>
</dbReference>
<dbReference type="Pfam" id="PF06303">
    <property type="entry name" value="MatP"/>
    <property type="match status" value="1"/>
</dbReference>
<dbReference type="Pfam" id="PF17414">
    <property type="entry name" value="MatP_C"/>
    <property type="match status" value="1"/>
</dbReference>
<sequence>MKYQKLENQEANWKWIYLIRKHREGENITRYEERSLQEAKAQELLESQNYPEKIEEWIKNHLSPALPIKLDQAIRARRKRFFNGEKQHTKKKSIDLEYAVWLRLSKYSRKMKMTLSETITYMIDERESKAQFENQMAAMKTSLKNLLK</sequence>
<evidence type="ECO:0000255" key="1">
    <source>
        <dbReference type="HAMAP-Rule" id="MF_01073"/>
    </source>
</evidence>
<keyword id="KW-0131">Cell cycle</keyword>
<keyword id="KW-0132">Cell division</keyword>
<keyword id="KW-0963">Cytoplasm</keyword>
<keyword id="KW-0238">DNA-binding</keyword>
<organism>
    <name type="scientific">Haemophilus influenzae (strain PittEE)</name>
    <dbReference type="NCBI Taxonomy" id="374930"/>
    <lineage>
        <taxon>Bacteria</taxon>
        <taxon>Pseudomonadati</taxon>
        <taxon>Pseudomonadota</taxon>
        <taxon>Gammaproteobacteria</taxon>
        <taxon>Pasteurellales</taxon>
        <taxon>Pasteurellaceae</taxon>
        <taxon>Haemophilus</taxon>
    </lineage>
</organism>
<accession>A5UC89</accession>
<reference key="1">
    <citation type="journal article" date="2007" name="Genome Biol.">
        <title>Characterization and modeling of the Haemophilus influenzae core and supragenomes based on the complete genomic sequences of Rd and 12 clinical nontypeable strains.</title>
        <authorList>
            <person name="Hogg J.S."/>
            <person name="Hu F.Z."/>
            <person name="Janto B."/>
            <person name="Boissy R."/>
            <person name="Hayes J."/>
            <person name="Keefe R."/>
            <person name="Post J.C."/>
            <person name="Ehrlich G.D."/>
        </authorList>
    </citation>
    <scope>NUCLEOTIDE SEQUENCE [LARGE SCALE GENOMIC DNA]</scope>
    <source>
        <strain>PittEE</strain>
    </source>
</reference>
<gene>
    <name evidence="1" type="primary">matP</name>
    <name type="ordered locus">CGSHiEE_04995</name>
</gene>
<protein>
    <recommendedName>
        <fullName evidence="1">Macrodomain Ter protein</fullName>
    </recommendedName>
</protein>
<proteinExistence type="inferred from homology"/>
<comment type="function">
    <text evidence="1">Required for spatial organization of the terminus region of the chromosome (Ter macrodomain) during the cell cycle. Prevents early segregation of duplicated Ter macrodomains during cell division. Binds specifically to matS, which is a 13 bp signature motif repeated within the Ter macrodomain.</text>
</comment>
<comment type="subunit">
    <text evidence="1">Homodimer.</text>
</comment>
<comment type="subcellular location">
    <subcellularLocation>
        <location evidence="1">Cytoplasm</location>
    </subcellularLocation>
</comment>
<comment type="similarity">
    <text evidence="1">Belongs to the MatP family.</text>
</comment>
<name>MATP_HAEIE</name>